<proteinExistence type="inferred from homology"/>
<dbReference type="EMBL" id="CP000141">
    <property type="protein sequence ID" value="ABB13717.1"/>
    <property type="molecule type" value="Genomic_DNA"/>
</dbReference>
<dbReference type="RefSeq" id="WP_011345415.1">
    <property type="nucleotide sequence ID" value="NC_007503.1"/>
</dbReference>
<dbReference type="SMR" id="Q3A942"/>
<dbReference type="FunCoup" id="Q3A942">
    <property type="interactions" value="88"/>
</dbReference>
<dbReference type="STRING" id="246194.CHY_2549"/>
<dbReference type="KEGG" id="chy:CHY_2549"/>
<dbReference type="eggNOG" id="COG0711">
    <property type="taxonomic scope" value="Bacteria"/>
</dbReference>
<dbReference type="HOGENOM" id="CLU_079215_4_5_9"/>
<dbReference type="InParanoid" id="Q3A942"/>
<dbReference type="OrthoDB" id="9795863at2"/>
<dbReference type="Proteomes" id="UP000002706">
    <property type="component" value="Chromosome"/>
</dbReference>
<dbReference type="GO" id="GO:0005886">
    <property type="term" value="C:plasma membrane"/>
    <property type="evidence" value="ECO:0007669"/>
    <property type="project" value="UniProtKB-SubCell"/>
</dbReference>
<dbReference type="GO" id="GO:0045259">
    <property type="term" value="C:proton-transporting ATP synthase complex"/>
    <property type="evidence" value="ECO:0007669"/>
    <property type="project" value="UniProtKB-KW"/>
</dbReference>
<dbReference type="GO" id="GO:0046933">
    <property type="term" value="F:proton-transporting ATP synthase activity, rotational mechanism"/>
    <property type="evidence" value="ECO:0007669"/>
    <property type="project" value="UniProtKB-UniRule"/>
</dbReference>
<dbReference type="GO" id="GO:0046961">
    <property type="term" value="F:proton-transporting ATPase activity, rotational mechanism"/>
    <property type="evidence" value="ECO:0007669"/>
    <property type="project" value="TreeGrafter"/>
</dbReference>
<dbReference type="CDD" id="cd06503">
    <property type="entry name" value="ATP-synt_Fo_b"/>
    <property type="match status" value="1"/>
</dbReference>
<dbReference type="Gene3D" id="6.10.250.1580">
    <property type="match status" value="1"/>
</dbReference>
<dbReference type="HAMAP" id="MF_01398">
    <property type="entry name" value="ATP_synth_b_bprime"/>
    <property type="match status" value="1"/>
</dbReference>
<dbReference type="InterPro" id="IPR028987">
    <property type="entry name" value="ATP_synth_B-like_membr_sf"/>
</dbReference>
<dbReference type="InterPro" id="IPR002146">
    <property type="entry name" value="ATP_synth_b/b'su_bac/chlpt"/>
</dbReference>
<dbReference type="InterPro" id="IPR005864">
    <property type="entry name" value="ATP_synth_F0_bsu_bac"/>
</dbReference>
<dbReference type="InterPro" id="IPR050059">
    <property type="entry name" value="ATP_synthase_B_chain"/>
</dbReference>
<dbReference type="NCBIfam" id="TIGR01144">
    <property type="entry name" value="ATP_synt_b"/>
    <property type="match status" value="1"/>
</dbReference>
<dbReference type="PANTHER" id="PTHR33445">
    <property type="entry name" value="ATP SYNTHASE SUBUNIT B', CHLOROPLASTIC"/>
    <property type="match status" value="1"/>
</dbReference>
<dbReference type="PANTHER" id="PTHR33445:SF2">
    <property type="entry name" value="ATP SYNTHASE SUBUNIT B', CHLOROPLASTIC"/>
    <property type="match status" value="1"/>
</dbReference>
<dbReference type="Pfam" id="PF00430">
    <property type="entry name" value="ATP-synt_B"/>
    <property type="match status" value="1"/>
</dbReference>
<dbReference type="SUPFAM" id="SSF81573">
    <property type="entry name" value="F1F0 ATP synthase subunit B, membrane domain"/>
    <property type="match status" value="1"/>
</dbReference>
<gene>
    <name evidence="1" type="primary">atpF</name>
    <name type="ordered locus">CHY_2549</name>
</gene>
<sequence length="159" mass="18210">MHFDWSDFIWTLINFFVLLFILKILLYKPVLKTIEDRKKSIEESLEKAAKAQEEAERIKAEYDGMIAKAREEAREIIAKAQKTAQAEKEEIIATAQREAQSLLADAKATIAQEKEKALRELRQEIGNLAVLAAGKILNRAVTLEDHQKLVDEFLNEVKM</sequence>
<protein>
    <recommendedName>
        <fullName evidence="1">ATP synthase subunit b</fullName>
    </recommendedName>
    <alternativeName>
        <fullName evidence="1">ATP synthase F(0) sector subunit b</fullName>
    </alternativeName>
    <alternativeName>
        <fullName evidence="1">ATPase subunit I</fullName>
    </alternativeName>
    <alternativeName>
        <fullName evidence="1">F-type ATPase subunit b</fullName>
        <shortName evidence="1">F-ATPase subunit b</shortName>
    </alternativeName>
</protein>
<accession>Q3A942</accession>
<organism>
    <name type="scientific">Carboxydothermus hydrogenoformans (strain ATCC BAA-161 / DSM 6008 / Z-2901)</name>
    <dbReference type="NCBI Taxonomy" id="246194"/>
    <lineage>
        <taxon>Bacteria</taxon>
        <taxon>Bacillati</taxon>
        <taxon>Bacillota</taxon>
        <taxon>Clostridia</taxon>
        <taxon>Thermoanaerobacterales</taxon>
        <taxon>Thermoanaerobacteraceae</taxon>
        <taxon>Carboxydothermus</taxon>
    </lineage>
</organism>
<feature type="chain" id="PRO_0000368403" description="ATP synthase subunit b">
    <location>
        <begin position="1"/>
        <end position="159"/>
    </location>
</feature>
<feature type="transmembrane region" description="Helical" evidence="1">
    <location>
        <begin position="7"/>
        <end position="27"/>
    </location>
</feature>
<reference key="1">
    <citation type="journal article" date="2005" name="PLoS Genet.">
        <title>Life in hot carbon monoxide: the complete genome sequence of Carboxydothermus hydrogenoformans Z-2901.</title>
        <authorList>
            <person name="Wu M."/>
            <person name="Ren Q."/>
            <person name="Durkin A.S."/>
            <person name="Daugherty S.C."/>
            <person name="Brinkac L.M."/>
            <person name="Dodson R.J."/>
            <person name="Madupu R."/>
            <person name="Sullivan S.A."/>
            <person name="Kolonay J.F."/>
            <person name="Nelson W.C."/>
            <person name="Tallon L.J."/>
            <person name="Jones K.M."/>
            <person name="Ulrich L.E."/>
            <person name="Gonzalez J.M."/>
            <person name="Zhulin I.B."/>
            <person name="Robb F.T."/>
            <person name="Eisen J.A."/>
        </authorList>
    </citation>
    <scope>NUCLEOTIDE SEQUENCE [LARGE SCALE GENOMIC DNA]</scope>
    <source>
        <strain>ATCC BAA-161 / DSM 6008 / Z-2901</strain>
    </source>
</reference>
<keyword id="KW-0066">ATP synthesis</keyword>
<keyword id="KW-1003">Cell membrane</keyword>
<keyword id="KW-0138">CF(0)</keyword>
<keyword id="KW-0375">Hydrogen ion transport</keyword>
<keyword id="KW-0406">Ion transport</keyword>
<keyword id="KW-0472">Membrane</keyword>
<keyword id="KW-1185">Reference proteome</keyword>
<keyword id="KW-0812">Transmembrane</keyword>
<keyword id="KW-1133">Transmembrane helix</keyword>
<keyword id="KW-0813">Transport</keyword>
<evidence type="ECO:0000255" key="1">
    <source>
        <dbReference type="HAMAP-Rule" id="MF_01398"/>
    </source>
</evidence>
<name>ATPF_CARHZ</name>
<comment type="function">
    <text evidence="1">F(1)F(0) ATP synthase produces ATP from ADP in the presence of a proton or sodium gradient. F-type ATPases consist of two structural domains, F(1) containing the extramembraneous catalytic core and F(0) containing the membrane proton channel, linked together by a central stalk and a peripheral stalk. During catalysis, ATP synthesis in the catalytic domain of F(1) is coupled via a rotary mechanism of the central stalk subunits to proton translocation.</text>
</comment>
<comment type="function">
    <text evidence="1">Component of the F(0) channel, it forms part of the peripheral stalk, linking F(1) to F(0).</text>
</comment>
<comment type="subunit">
    <text evidence="1">F-type ATPases have 2 components, F(1) - the catalytic core - and F(0) - the membrane proton channel. F(1) has five subunits: alpha(3), beta(3), gamma(1), delta(1), epsilon(1). F(0) has three main subunits: a(1), b(2) and c(10-14). The alpha and beta chains form an alternating ring which encloses part of the gamma chain. F(1) is attached to F(0) by a central stalk formed by the gamma and epsilon chains, while a peripheral stalk is formed by the delta and b chains.</text>
</comment>
<comment type="subcellular location">
    <subcellularLocation>
        <location evidence="1">Cell membrane</location>
        <topology evidence="1">Single-pass membrane protein</topology>
    </subcellularLocation>
</comment>
<comment type="similarity">
    <text evidence="1">Belongs to the ATPase B chain family.</text>
</comment>